<dbReference type="EC" id="2.3.3.16"/>
<dbReference type="EMBL" id="M74818">
    <property type="protein sequence ID" value="AAA52231.1"/>
    <property type="molecule type" value="Genomic_DNA"/>
</dbReference>
<dbReference type="SMR" id="P27660"/>
<dbReference type="STRING" id="1398.AB434_1960"/>
<dbReference type="UniPathway" id="UPA00223">
    <property type="reaction ID" value="UER00717"/>
</dbReference>
<dbReference type="GO" id="GO:0005829">
    <property type="term" value="C:cytosol"/>
    <property type="evidence" value="ECO:0007669"/>
    <property type="project" value="TreeGrafter"/>
</dbReference>
<dbReference type="GO" id="GO:0004108">
    <property type="term" value="F:citrate (Si)-synthase activity"/>
    <property type="evidence" value="ECO:0007669"/>
    <property type="project" value="TreeGrafter"/>
</dbReference>
<dbReference type="GO" id="GO:0005975">
    <property type="term" value="P:carbohydrate metabolic process"/>
    <property type="evidence" value="ECO:0007669"/>
    <property type="project" value="TreeGrafter"/>
</dbReference>
<dbReference type="GO" id="GO:0006099">
    <property type="term" value="P:tricarboxylic acid cycle"/>
    <property type="evidence" value="ECO:0007669"/>
    <property type="project" value="UniProtKB-UniPathway"/>
</dbReference>
<dbReference type="CDD" id="cd06118">
    <property type="entry name" value="citrate_synt_like_1"/>
    <property type="match status" value="1"/>
</dbReference>
<dbReference type="FunFam" id="1.10.230.10:FF:000003">
    <property type="entry name" value="Citrate synthase"/>
    <property type="match status" value="1"/>
</dbReference>
<dbReference type="Gene3D" id="1.10.580.10">
    <property type="entry name" value="Citrate Synthase, domain 1"/>
    <property type="match status" value="1"/>
</dbReference>
<dbReference type="Gene3D" id="1.10.230.10">
    <property type="entry name" value="Cytochrome P450-Terp, domain 2"/>
    <property type="match status" value="1"/>
</dbReference>
<dbReference type="InterPro" id="IPR016142">
    <property type="entry name" value="Citrate_synth-like_lrg_a-sub"/>
</dbReference>
<dbReference type="InterPro" id="IPR016143">
    <property type="entry name" value="Citrate_synth-like_sm_a-sub"/>
</dbReference>
<dbReference type="InterPro" id="IPR002020">
    <property type="entry name" value="Citrate_synthase"/>
</dbReference>
<dbReference type="InterPro" id="IPR019810">
    <property type="entry name" value="Citrate_synthase_AS"/>
</dbReference>
<dbReference type="InterPro" id="IPR024176">
    <property type="entry name" value="Citrate_synthase_bac-typ"/>
</dbReference>
<dbReference type="InterPro" id="IPR036969">
    <property type="entry name" value="Citrate_synthase_sf"/>
</dbReference>
<dbReference type="NCBIfam" id="NF009004">
    <property type="entry name" value="PRK12349.1"/>
    <property type="match status" value="1"/>
</dbReference>
<dbReference type="PANTHER" id="PTHR11739">
    <property type="entry name" value="CITRATE SYNTHASE"/>
    <property type="match status" value="1"/>
</dbReference>
<dbReference type="PANTHER" id="PTHR11739:SF11">
    <property type="entry name" value="CITRATE_2-METHYLCITRATE SYNTHASE"/>
    <property type="match status" value="1"/>
</dbReference>
<dbReference type="Pfam" id="PF00285">
    <property type="entry name" value="Citrate_synt"/>
    <property type="match status" value="1"/>
</dbReference>
<dbReference type="PIRSF" id="PIRSF001369">
    <property type="entry name" value="Citrate_synth"/>
    <property type="match status" value="1"/>
</dbReference>
<dbReference type="PRINTS" id="PR00143">
    <property type="entry name" value="CITRTSNTHASE"/>
</dbReference>
<dbReference type="SUPFAM" id="SSF48256">
    <property type="entry name" value="Citrate synthase"/>
    <property type="match status" value="1"/>
</dbReference>
<dbReference type="PROSITE" id="PS00480">
    <property type="entry name" value="CITRATE_SYNTHASE"/>
    <property type="match status" value="1"/>
</dbReference>
<feature type="chain" id="PRO_0000169927" description="Citrate synthase">
    <location>
        <begin position="1"/>
        <end position="373"/>
    </location>
</feature>
<feature type="active site" evidence="1">
    <location>
        <position position="262"/>
    </location>
</feature>
<feature type="active site" evidence="1">
    <location>
        <position position="314"/>
    </location>
</feature>
<organism>
    <name type="scientific">Heyndrickxia coagulans</name>
    <name type="common">Weizmannia coagulans</name>
    <dbReference type="NCBI Taxonomy" id="1398"/>
    <lineage>
        <taxon>Bacteria</taxon>
        <taxon>Bacillati</taxon>
        <taxon>Bacillota</taxon>
        <taxon>Bacilli</taxon>
        <taxon>Bacillales</taxon>
        <taxon>Bacillaceae</taxon>
        <taxon>Heyndrickxia</taxon>
    </lineage>
</organism>
<accession>P27660</accession>
<reference key="1">
    <citation type="journal article" date="1992" name="Appl. Environ. Microbiol.">
        <title>Cloning and nucleotide sequence of the gene coding for citrate synthase from a thermotolerant Bacillus sp.</title>
        <authorList>
            <person name="Schendel F.J."/>
            <person name="August P.R."/>
            <person name="Anderson C.R."/>
            <person name="Hanson R.S."/>
            <person name="Flickinger M.C."/>
        </authorList>
    </citation>
    <scope>NUCLEOTIDE SEQUENCE [GENOMIC DNA]</scope>
    <source>
        <strain>ATCC 55182</strain>
    </source>
</reference>
<proteinExistence type="inferred from homology"/>
<sequence>MVNTNQFIPGLEGVIASETKISFLDTVNSEIVIKGYDLLALSKTKGYLDIVHLLLEGTIPNEAEKQHLEETLKQEYDVPDEIIQVLSLLPKTAHPMDALRTGVSVLASFDTELLNREHSTNLKRAYQLLGKIPNIVANSYHILHSEEPVQPLQDLSYSANFLYMITGKKPTELEEKIFDRSLVLYSEHELPNSTFTARVIASTLSDLYGALTGAVASLKGHLHGGANEAVMEMLQDAQTVEGFKHLLHDKLSKKEKIMGFGHRVYMKKMDPRAAMMKEALKELSAVNGDDLLLQMCEAGEQIMREEKGLFPNLDYYAAPVYWKLGIPIPLYTPIFFSSRTVGLCAHVMEQHENNRIFRPRVLYTGARNLRVED</sequence>
<protein>
    <recommendedName>
        <fullName>Citrate synthase</fullName>
        <ecNumber>2.3.3.16</ecNumber>
    </recommendedName>
</protein>
<comment type="catalytic activity">
    <reaction evidence="1">
        <text>oxaloacetate + acetyl-CoA + H2O = citrate + CoA + H(+)</text>
        <dbReference type="Rhea" id="RHEA:16845"/>
        <dbReference type="ChEBI" id="CHEBI:15377"/>
        <dbReference type="ChEBI" id="CHEBI:15378"/>
        <dbReference type="ChEBI" id="CHEBI:16452"/>
        <dbReference type="ChEBI" id="CHEBI:16947"/>
        <dbReference type="ChEBI" id="CHEBI:57287"/>
        <dbReference type="ChEBI" id="CHEBI:57288"/>
        <dbReference type="EC" id="2.3.3.16"/>
    </reaction>
</comment>
<comment type="pathway">
    <text>Carbohydrate metabolism; tricarboxylic acid cycle; isocitrate from oxaloacetate: step 1/2.</text>
</comment>
<comment type="subunit">
    <text>Homohexamer.</text>
</comment>
<comment type="miscellaneous">
    <text>Citrate synthase is found in nearly all cells capable of oxidative metabolism.</text>
</comment>
<comment type="similarity">
    <text evidence="2">Belongs to the citrate synthase family.</text>
</comment>
<keyword id="KW-0021">Allosteric enzyme</keyword>
<keyword id="KW-0808">Transferase</keyword>
<keyword id="KW-0816">Tricarboxylic acid cycle</keyword>
<evidence type="ECO:0000255" key="1">
    <source>
        <dbReference type="PROSITE-ProRule" id="PRU10117"/>
    </source>
</evidence>
<evidence type="ECO:0000305" key="2"/>
<gene>
    <name type="primary">ctsA</name>
</gene>
<name>CISY_HEYCO</name>